<gene>
    <name evidence="1" type="primary">lgt</name>
    <name type="ordered locus">PA14_04460</name>
</gene>
<accession>Q02U74</accession>
<dbReference type="EC" id="2.5.1.145" evidence="1"/>
<dbReference type="EMBL" id="CP000438">
    <property type="protein sequence ID" value="ABJ15305.1"/>
    <property type="molecule type" value="Genomic_DNA"/>
</dbReference>
<dbReference type="RefSeq" id="WP_003084409.1">
    <property type="nucleotide sequence ID" value="NZ_CP034244.1"/>
</dbReference>
<dbReference type="SMR" id="Q02U74"/>
<dbReference type="KEGG" id="pau:PA14_04460"/>
<dbReference type="PseudoCAP" id="PA14_04460"/>
<dbReference type="HOGENOM" id="CLU_013386_1_0_6"/>
<dbReference type="BioCyc" id="PAER208963:G1G74-373-MONOMER"/>
<dbReference type="UniPathway" id="UPA00664"/>
<dbReference type="Proteomes" id="UP000000653">
    <property type="component" value="Chromosome"/>
</dbReference>
<dbReference type="GO" id="GO:0005886">
    <property type="term" value="C:plasma membrane"/>
    <property type="evidence" value="ECO:0007669"/>
    <property type="project" value="UniProtKB-SubCell"/>
</dbReference>
<dbReference type="GO" id="GO:0008961">
    <property type="term" value="F:phosphatidylglycerol-prolipoprotein diacylglyceryl transferase activity"/>
    <property type="evidence" value="ECO:0007669"/>
    <property type="project" value="UniProtKB-UniRule"/>
</dbReference>
<dbReference type="GO" id="GO:0042158">
    <property type="term" value="P:lipoprotein biosynthetic process"/>
    <property type="evidence" value="ECO:0007669"/>
    <property type="project" value="UniProtKB-UniRule"/>
</dbReference>
<dbReference type="HAMAP" id="MF_01147">
    <property type="entry name" value="Lgt"/>
    <property type="match status" value="1"/>
</dbReference>
<dbReference type="InterPro" id="IPR001640">
    <property type="entry name" value="Lgt"/>
</dbReference>
<dbReference type="NCBIfam" id="TIGR00544">
    <property type="entry name" value="lgt"/>
    <property type="match status" value="1"/>
</dbReference>
<dbReference type="PANTHER" id="PTHR30589:SF0">
    <property type="entry name" value="PHOSPHATIDYLGLYCEROL--PROLIPOPROTEIN DIACYLGLYCERYL TRANSFERASE"/>
    <property type="match status" value="1"/>
</dbReference>
<dbReference type="PANTHER" id="PTHR30589">
    <property type="entry name" value="PROLIPOPROTEIN DIACYLGLYCERYL TRANSFERASE"/>
    <property type="match status" value="1"/>
</dbReference>
<dbReference type="Pfam" id="PF01790">
    <property type="entry name" value="LGT"/>
    <property type="match status" value="1"/>
</dbReference>
<dbReference type="PROSITE" id="PS01311">
    <property type="entry name" value="LGT"/>
    <property type="match status" value="1"/>
</dbReference>
<name>LGT_PSEAB</name>
<reference key="1">
    <citation type="journal article" date="2006" name="Genome Biol.">
        <title>Genomic analysis reveals that Pseudomonas aeruginosa virulence is combinatorial.</title>
        <authorList>
            <person name="Lee D.G."/>
            <person name="Urbach J.M."/>
            <person name="Wu G."/>
            <person name="Liberati N.T."/>
            <person name="Feinbaum R.L."/>
            <person name="Miyata S."/>
            <person name="Diggins L.T."/>
            <person name="He J."/>
            <person name="Saucier M."/>
            <person name="Deziel E."/>
            <person name="Friedman L."/>
            <person name="Li L."/>
            <person name="Grills G."/>
            <person name="Montgomery K."/>
            <person name="Kucherlapati R."/>
            <person name="Rahme L.G."/>
            <person name="Ausubel F.M."/>
        </authorList>
    </citation>
    <scope>NUCLEOTIDE SEQUENCE [LARGE SCALE GENOMIC DNA]</scope>
    <source>
        <strain>UCBPP-PA14</strain>
    </source>
</reference>
<keyword id="KW-0997">Cell inner membrane</keyword>
<keyword id="KW-1003">Cell membrane</keyword>
<keyword id="KW-0472">Membrane</keyword>
<keyword id="KW-0808">Transferase</keyword>
<keyword id="KW-0812">Transmembrane</keyword>
<keyword id="KW-1133">Transmembrane helix</keyword>
<proteinExistence type="inferred from homology"/>
<sequence length="266" mass="29833">MLTYPQIDPVALAVGPLKIHWYGLMYLIGIGGAWLLASRRMKRFDPTWTKERLSDLVFWVACGVILGGRLGYVLFYNLDEYIANPTLIFEVWKGGMSFHGGLLGVMLAVWWFGKRHGKSFFQLMDFIAPLVPIGLGAGRIGNFINSELWGKVSDVPWAMVFPNGGPLPRHPSQLYQFALEGVALFVILWLFTRKPRPTASVSGLFVLCYGIFRFVVEFVRVPDAQLGYLAWGWLTMGQVLCVPMVLAGIALMVWAYRRDAAQPKAA</sequence>
<organism>
    <name type="scientific">Pseudomonas aeruginosa (strain UCBPP-PA14)</name>
    <dbReference type="NCBI Taxonomy" id="208963"/>
    <lineage>
        <taxon>Bacteria</taxon>
        <taxon>Pseudomonadati</taxon>
        <taxon>Pseudomonadota</taxon>
        <taxon>Gammaproteobacteria</taxon>
        <taxon>Pseudomonadales</taxon>
        <taxon>Pseudomonadaceae</taxon>
        <taxon>Pseudomonas</taxon>
    </lineage>
</organism>
<evidence type="ECO:0000255" key="1">
    <source>
        <dbReference type="HAMAP-Rule" id="MF_01147"/>
    </source>
</evidence>
<comment type="function">
    <text evidence="1">Catalyzes the transfer of the diacylglyceryl group from phosphatidylglycerol to the sulfhydryl group of the N-terminal cysteine of a prolipoprotein, the first step in the formation of mature lipoproteins.</text>
</comment>
<comment type="catalytic activity">
    <reaction evidence="1">
        <text>L-cysteinyl-[prolipoprotein] + a 1,2-diacyl-sn-glycero-3-phospho-(1'-sn-glycerol) = an S-1,2-diacyl-sn-glyceryl-L-cysteinyl-[prolipoprotein] + sn-glycerol 1-phosphate + H(+)</text>
        <dbReference type="Rhea" id="RHEA:56712"/>
        <dbReference type="Rhea" id="RHEA-COMP:14679"/>
        <dbReference type="Rhea" id="RHEA-COMP:14680"/>
        <dbReference type="ChEBI" id="CHEBI:15378"/>
        <dbReference type="ChEBI" id="CHEBI:29950"/>
        <dbReference type="ChEBI" id="CHEBI:57685"/>
        <dbReference type="ChEBI" id="CHEBI:64716"/>
        <dbReference type="ChEBI" id="CHEBI:140658"/>
        <dbReference type="EC" id="2.5.1.145"/>
    </reaction>
</comment>
<comment type="pathway">
    <text evidence="1">Protein modification; lipoprotein biosynthesis (diacylglyceryl transfer).</text>
</comment>
<comment type="subcellular location">
    <subcellularLocation>
        <location evidence="1">Cell inner membrane</location>
        <topology evidence="1">Multi-pass membrane protein</topology>
    </subcellularLocation>
</comment>
<comment type="similarity">
    <text evidence="1">Belongs to the Lgt family.</text>
</comment>
<protein>
    <recommendedName>
        <fullName evidence="1">Phosphatidylglycerol--prolipoprotein diacylglyceryl transferase</fullName>
        <ecNumber evidence="1">2.5.1.145</ecNumber>
    </recommendedName>
</protein>
<feature type="chain" id="PRO_1000053475" description="Phosphatidylglycerol--prolipoprotein diacylglyceryl transferase">
    <location>
        <begin position="1"/>
        <end position="266"/>
    </location>
</feature>
<feature type="transmembrane region" description="Helical" evidence="1">
    <location>
        <begin position="17"/>
        <end position="37"/>
    </location>
</feature>
<feature type="transmembrane region" description="Helical" evidence="1">
    <location>
        <begin position="56"/>
        <end position="76"/>
    </location>
</feature>
<feature type="transmembrane region" description="Helical" evidence="1">
    <location>
        <begin position="92"/>
        <end position="112"/>
    </location>
</feature>
<feature type="transmembrane region" description="Helical" evidence="1">
    <location>
        <begin position="120"/>
        <end position="140"/>
    </location>
</feature>
<feature type="transmembrane region" description="Helical" evidence="1">
    <location>
        <begin position="171"/>
        <end position="191"/>
    </location>
</feature>
<feature type="transmembrane region" description="Helical" evidence="1">
    <location>
        <begin position="199"/>
        <end position="219"/>
    </location>
</feature>
<feature type="transmembrane region" description="Helical" evidence="1">
    <location>
        <begin position="233"/>
        <end position="253"/>
    </location>
</feature>
<feature type="binding site" evidence="1">
    <location>
        <position position="139"/>
    </location>
    <ligand>
        <name>a 1,2-diacyl-sn-glycero-3-phospho-(1'-sn-glycerol)</name>
        <dbReference type="ChEBI" id="CHEBI:64716"/>
    </ligand>
</feature>